<gene>
    <name evidence="1" type="primary">rplM</name>
    <name type="ordered locus">DSY0727</name>
</gene>
<sequence length="143" mass="16274">MSTFFAKANAVERKWYVIDAAGLPLGRLATEAARILRGKHKPTFTPNVDTGDHVIIINAEKVVLTGNKLDQKMYRRHSGYPGGLKETPYRKLMQNMPERAVEHAVKGMLPHNKLGAQMYTKLKVYRDENHPHQAQQPEAWTIQ</sequence>
<accession>Q24ZM6</accession>
<reference key="1">
    <citation type="journal article" date="2006" name="J. Bacteriol.">
        <title>Complete genome sequence of the dehalorespiring bacterium Desulfitobacterium hafniense Y51 and comparison with Dehalococcoides ethenogenes 195.</title>
        <authorList>
            <person name="Nonaka H."/>
            <person name="Keresztes G."/>
            <person name="Shinoda Y."/>
            <person name="Ikenaga Y."/>
            <person name="Abe M."/>
            <person name="Naito K."/>
            <person name="Inatomi K."/>
            <person name="Furukawa K."/>
            <person name="Inui M."/>
            <person name="Yukawa H."/>
        </authorList>
    </citation>
    <scope>NUCLEOTIDE SEQUENCE [LARGE SCALE GENOMIC DNA]</scope>
    <source>
        <strain>Y51</strain>
    </source>
</reference>
<comment type="function">
    <text evidence="1">This protein is one of the early assembly proteins of the 50S ribosomal subunit, although it is not seen to bind rRNA by itself. It is important during the early stages of 50S assembly.</text>
</comment>
<comment type="subunit">
    <text evidence="1">Part of the 50S ribosomal subunit.</text>
</comment>
<comment type="similarity">
    <text evidence="1">Belongs to the universal ribosomal protein uL13 family.</text>
</comment>
<comment type="sequence caution" evidence="2">
    <conflict type="erroneous initiation">
        <sequence resource="EMBL-CDS" id="BAE82516"/>
    </conflict>
</comment>
<proteinExistence type="inferred from homology"/>
<evidence type="ECO:0000255" key="1">
    <source>
        <dbReference type="HAMAP-Rule" id="MF_01366"/>
    </source>
</evidence>
<evidence type="ECO:0000305" key="2"/>
<feature type="chain" id="PRO_0000261719" description="Large ribosomal subunit protein uL13">
    <location>
        <begin position="1"/>
        <end position="143"/>
    </location>
</feature>
<name>RL13_DESHY</name>
<keyword id="KW-1185">Reference proteome</keyword>
<keyword id="KW-0687">Ribonucleoprotein</keyword>
<keyword id="KW-0689">Ribosomal protein</keyword>
<organism>
    <name type="scientific">Desulfitobacterium hafniense (strain Y51)</name>
    <dbReference type="NCBI Taxonomy" id="138119"/>
    <lineage>
        <taxon>Bacteria</taxon>
        <taxon>Bacillati</taxon>
        <taxon>Bacillota</taxon>
        <taxon>Clostridia</taxon>
        <taxon>Eubacteriales</taxon>
        <taxon>Desulfitobacteriaceae</taxon>
        <taxon>Desulfitobacterium</taxon>
    </lineage>
</organism>
<protein>
    <recommendedName>
        <fullName evidence="1">Large ribosomal subunit protein uL13</fullName>
    </recommendedName>
    <alternativeName>
        <fullName evidence="2">50S ribosomal protein L13</fullName>
    </alternativeName>
</protein>
<dbReference type="EMBL" id="AP008230">
    <property type="protein sequence ID" value="BAE82516.1"/>
    <property type="status" value="ALT_INIT"/>
    <property type="molecule type" value="Genomic_DNA"/>
</dbReference>
<dbReference type="RefSeq" id="WP_011459272.1">
    <property type="nucleotide sequence ID" value="NC_007907.1"/>
</dbReference>
<dbReference type="SMR" id="Q24ZM6"/>
<dbReference type="STRING" id="138119.DSY0727"/>
<dbReference type="KEGG" id="dsy:DSY0727"/>
<dbReference type="eggNOG" id="COG0102">
    <property type="taxonomic scope" value="Bacteria"/>
</dbReference>
<dbReference type="HOGENOM" id="CLU_082184_2_2_9"/>
<dbReference type="Proteomes" id="UP000001946">
    <property type="component" value="Chromosome"/>
</dbReference>
<dbReference type="GO" id="GO:0022625">
    <property type="term" value="C:cytosolic large ribosomal subunit"/>
    <property type="evidence" value="ECO:0007669"/>
    <property type="project" value="TreeGrafter"/>
</dbReference>
<dbReference type="GO" id="GO:0003729">
    <property type="term" value="F:mRNA binding"/>
    <property type="evidence" value="ECO:0007669"/>
    <property type="project" value="TreeGrafter"/>
</dbReference>
<dbReference type="GO" id="GO:0003735">
    <property type="term" value="F:structural constituent of ribosome"/>
    <property type="evidence" value="ECO:0007669"/>
    <property type="project" value="InterPro"/>
</dbReference>
<dbReference type="GO" id="GO:0017148">
    <property type="term" value="P:negative regulation of translation"/>
    <property type="evidence" value="ECO:0007669"/>
    <property type="project" value="TreeGrafter"/>
</dbReference>
<dbReference type="GO" id="GO:0006412">
    <property type="term" value="P:translation"/>
    <property type="evidence" value="ECO:0007669"/>
    <property type="project" value="UniProtKB-UniRule"/>
</dbReference>
<dbReference type="CDD" id="cd00392">
    <property type="entry name" value="Ribosomal_L13"/>
    <property type="match status" value="1"/>
</dbReference>
<dbReference type="FunFam" id="3.90.1180.10:FF:000001">
    <property type="entry name" value="50S ribosomal protein L13"/>
    <property type="match status" value="1"/>
</dbReference>
<dbReference type="Gene3D" id="3.90.1180.10">
    <property type="entry name" value="Ribosomal protein L13"/>
    <property type="match status" value="1"/>
</dbReference>
<dbReference type="HAMAP" id="MF_01366">
    <property type="entry name" value="Ribosomal_uL13"/>
    <property type="match status" value="1"/>
</dbReference>
<dbReference type="InterPro" id="IPR005822">
    <property type="entry name" value="Ribosomal_uL13"/>
</dbReference>
<dbReference type="InterPro" id="IPR005823">
    <property type="entry name" value="Ribosomal_uL13_bac-type"/>
</dbReference>
<dbReference type="InterPro" id="IPR023563">
    <property type="entry name" value="Ribosomal_uL13_CS"/>
</dbReference>
<dbReference type="InterPro" id="IPR036899">
    <property type="entry name" value="Ribosomal_uL13_sf"/>
</dbReference>
<dbReference type="NCBIfam" id="TIGR01066">
    <property type="entry name" value="rplM_bact"/>
    <property type="match status" value="1"/>
</dbReference>
<dbReference type="PANTHER" id="PTHR11545:SF2">
    <property type="entry name" value="LARGE RIBOSOMAL SUBUNIT PROTEIN UL13M"/>
    <property type="match status" value="1"/>
</dbReference>
<dbReference type="PANTHER" id="PTHR11545">
    <property type="entry name" value="RIBOSOMAL PROTEIN L13"/>
    <property type="match status" value="1"/>
</dbReference>
<dbReference type="Pfam" id="PF00572">
    <property type="entry name" value="Ribosomal_L13"/>
    <property type="match status" value="1"/>
</dbReference>
<dbReference type="PIRSF" id="PIRSF002181">
    <property type="entry name" value="Ribosomal_L13"/>
    <property type="match status" value="1"/>
</dbReference>
<dbReference type="SUPFAM" id="SSF52161">
    <property type="entry name" value="Ribosomal protein L13"/>
    <property type="match status" value="1"/>
</dbReference>
<dbReference type="PROSITE" id="PS00783">
    <property type="entry name" value="RIBOSOMAL_L13"/>
    <property type="match status" value="1"/>
</dbReference>